<feature type="initiator methionine" description="Removed" evidence="1">
    <location>
        <position position="1"/>
    </location>
</feature>
<feature type="chain" id="PRO_1000117384" description="Formamidopyrimidine-DNA glycosylase">
    <location>
        <begin position="2"/>
        <end position="269"/>
    </location>
</feature>
<feature type="zinc finger region" description="FPG-type" evidence="2">
    <location>
        <begin position="235"/>
        <end position="269"/>
    </location>
</feature>
<feature type="active site" description="Schiff-base intermediate with DNA" evidence="2">
    <location>
        <position position="2"/>
    </location>
</feature>
<feature type="active site" description="Proton donor" evidence="2">
    <location>
        <position position="3"/>
    </location>
</feature>
<feature type="active site" description="Proton donor; for beta-elimination activity" evidence="2">
    <location>
        <position position="57"/>
    </location>
</feature>
<feature type="active site" description="Proton donor; for delta-elimination activity" evidence="2">
    <location>
        <position position="259"/>
    </location>
</feature>
<feature type="binding site" evidence="2">
    <location>
        <position position="90"/>
    </location>
    <ligand>
        <name>DNA</name>
        <dbReference type="ChEBI" id="CHEBI:16991"/>
    </ligand>
</feature>
<feature type="binding site" evidence="2">
    <location>
        <position position="109"/>
    </location>
    <ligand>
        <name>DNA</name>
        <dbReference type="ChEBI" id="CHEBI:16991"/>
    </ligand>
</feature>
<feature type="binding site" evidence="2">
    <location>
        <position position="150"/>
    </location>
    <ligand>
        <name>DNA</name>
        <dbReference type="ChEBI" id="CHEBI:16991"/>
    </ligand>
</feature>
<reference key="1">
    <citation type="journal article" date="2008" name="J. Bacteriol.">
        <title>Insights into the environmental resistance gene pool from the genome sequence of the multidrug-resistant environmental isolate Escherichia coli SMS-3-5.</title>
        <authorList>
            <person name="Fricke W.F."/>
            <person name="Wright M.S."/>
            <person name="Lindell A.H."/>
            <person name="Harkins D.M."/>
            <person name="Baker-Austin C."/>
            <person name="Ravel J."/>
            <person name="Stepanauskas R."/>
        </authorList>
    </citation>
    <scope>NUCLEOTIDE SEQUENCE [LARGE SCALE GENOMIC DNA]</scope>
    <source>
        <strain>SMS-3-5 / SECEC</strain>
    </source>
</reference>
<evidence type="ECO:0000250" key="1"/>
<evidence type="ECO:0000255" key="2">
    <source>
        <dbReference type="HAMAP-Rule" id="MF_00103"/>
    </source>
</evidence>
<protein>
    <recommendedName>
        <fullName evidence="2">Formamidopyrimidine-DNA glycosylase</fullName>
        <shortName evidence="2">Fapy-DNA glycosylase</shortName>
        <ecNumber evidence="2">3.2.2.23</ecNumber>
    </recommendedName>
    <alternativeName>
        <fullName evidence="2">DNA-(apurinic or apyrimidinic site) lyase MutM</fullName>
        <shortName evidence="2">AP lyase MutM</shortName>
        <ecNumber evidence="2">4.2.99.18</ecNumber>
    </alternativeName>
</protein>
<sequence>MPELPEVETSRRGIEPHLVGATILHAVVRNGRLRWPVSEEIYRLSDQPVLSVQRRAKYLLLELPEGWIIIHLGMSGSLRILPEELPPEKHDHVDLVMSNGKVLRYTDPRRFGAWLWTKELEGHNVLAHLGPEPLSDDFNGEYLHQKCAKKKTAIKPWLMDNKLVVGVGNIYASESLFAAGIHPDRLASSLSLAECELLARVIKAVLLRSIEQGGTTLKDFLQSDGKPGYFAQELQVYGRKGEPCRVCGTPIVATKHAQRATFYCRQCQK</sequence>
<proteinExistence type="inferred from homology"/>
<comment type="function">
    <text evidence="2">Involved in base excision repair of DNA damaged by oxidation or by mutagenic agents. Acts as a DNA glycosylase that recognizes and removes damaged bases. Has a preference for oxidized purines, such as 7,8-dihydro-8-oxoguanine (8-oxoG). Has AP (apurinic/apyrimidinic) lyase activity and introduces nicks in the DNA strand. Cleaves the DNA backbone by beta-delta elimination to generate a single-strand break at the site of the removed base with both 3'- and 5'-phosphates.</text>
</comment>
<comment type="catalytic activity">
    <reaction evidence="2">
        <text>Hydrolysis of DNA containing ring-opened 7-methylguanine residues, releasing 2,6-diamino-4-hydroxy-5-(N-methyl)formamidopyrimidine.</text>
        <dbReference type="EC" id="3.2.2.23"/>
    </reaction>
</comment>
<comment type="catalytic activity">
    <reaction evidence="2">
        <text>2'-deoxyribonucleotide-(2'-deoxyribose 5'-phosphate)-2'-deoxyribonucleotide-DNA = a 3'-end 2'-deoxyribonucleotide-(2,3-dehydro-2,3-deoxyribose 5'-phosphate)-DNA + a 5'-end 5'-phospho-2'-deoxyribonucleoside-DNA + H(+)</text>
        <dbReference type="Rhea" id="RHEA:66592"/>
        <dbReference type="Rhea" id="RHEA-COMP:13180"/>
        <dbReference type="Rhea" id="RHEA-COMP:16897"/>
        <dbReference type="Rhea" id="RHEA-COMP:17067"/>
        <dbReference type="ChEBI" id="CHEBI:15378"/>
        <dbReference type="ChEBI" id="CHEBI:136412"/>
        <dbReference type="ChEBI" id="CHEBI:157695"/>
        <dbReference type="ChEBI" id="CHEBI:167181"/>
        <dbReference type="EC" id="4.2.99.18"/>
    </reaction>
</comment>
<comment type="cofactor">
    <cofactor evidence="2">
        <name>Zn(2+)</name>
        <dbReference type="ChEBI" id="CHEBI:29105"/>
    </cofactor>
    <text evidence="2">Binds 1 zinc ion per subunit.</text>
</comment>
<comment type="subunit">
    <text evidence="2">Monomer.</text>
</comment>
<comment type="similarity">
    <text evidence="2">Belongs to the FPG family.</text>
</comment>
<name>FPG_ECOSM</name>
<dbReference type="EC" id="3.2.2.23" evidence="2"/>
<dbReference type="EC" id="4.2.99.18" evidence="2"/>
<dbReference type="EMBL" id="CP000970">
    <property type="protein sequence ID" value="ACB19949.1"/>
    <property type="molecule type" value="Genomic_DNA"/>
</dbReference>
<dbReference type="RefSeq" id="WP_001114533.1">
    <property type="nucleotide sequence ID" value="NC_010498.1"/>
</dbReference>
<dbReference type="SMR" id="B1LK72"/>
<dbReference type="GeneID" id="93778348"/>
<dbReference type="KEGG" id="ecm:EcSMS35_3970"/>
<dbReference type="HOGENOM" id="CLU_038423_1_1_6"/>
<dbReference type="Proteomes" id="UP000007011">
    <property type="component" value="Chromosome"/>
</dbReference>
<dbReference type="GO" id="GO:0034039">
    <property type="term" value="F:8-oxo-7,8-dihydroguanine DNA N-glycosylase activity"/>
    <property type="evidence" value="ECO:0007669"/>
    <property type="project" value="TreeGrafter"/>
</dbReference>
<dbReference type="GO" id="GO:0140078">
    <property type="term" value="F:class I DNA-(apurinic or apyrimidinic site) endonuclease activity"/>
    <property type="evidence" value="ECO:0007669"/>
    <property type="project" value="UniProtKB-EC"/>
</dbReference>
<dbReference type="GO" id="GO:0003684">
    <property type="term" value="F:damaged DNA binding"/>
    <property type="evidence" value="ECO:0007669"/>
    <property type="project" value="InterPro"/>
</dbReference>
<dbReference type="GO" id="GO:0008270">
    <property type="term" value="F:zinc ion binding"/>
    <property type="evidence" value="ECO:0007669"/>
    <property type="project" value="UniProtKB-UniRule"/>
</dbReference>
<dbReference type="GO" id="GO:0006284">
    <property type="term" value="P:base-excision repair"/>
    <property type="evidence" value="ECO:0007669"/>
    <property type="project" value="InterPro"/>
</dbReference>
<dbReference type="CDD" id="cd08966">
    <property type="entry name" value="EcFpg-like_N"/>
    <property type="match status" value="1"/>
</dbReference>
<dbReference type="FunFam" id="1.10.8.50:FF:000003">
    <property type="entry name" value="Formamidopyrimidine-DNA glycosylase"/>
    <property type="match status" value="1"/>
</dbReference>
<dbReference type="FunFam" id="3.20.190.10:FF:000001">
    <property type="entry name" value="Formamidopyrimidine-DNA glycosylase"/>
    <property type="match status" value="1"/>
</dbReference>
<dbReference type="Gene3D" id="1.10.8.50">
    <property type="match status" value="1"/>
</dbReference>
<dbReference type="Gene3D" id="3.20.190.10">
    <property type="entry name" value="MutM-like, N-terminal"/>
    <property type="match status" value="1"/>
</dbReference>
<dbReference type="HAMAP" id="MF_00103">
    <property type="entry name" value="Fapy_DNA_glycosyl"/>
    <property type="match status" value="1"/>
</dbReference>
<dbReference type="InterPro" id="IPR015886">
    <property type="entry name" value="DNA_glyclase/AP_lyase_DNA-bd"/>
</dbReference>
<dbReference type="InterPro" id="IPR015887">
    <property type="entry name" value="DNA_glyclase_Znf_dom_DNA_BS"/>
</dbReference>
<dbReference type="InterPro" id="IPR020629">
    <property type="entry name" value="Formamido-pyr_DNA_Glyclase"/>
</dbReference>
<dbReference type="InterPro" id="IPR012319">
    <property type="entry name" value="FPG_cat"/>
</dbReference>
<dbReference type="InterPro" id="IPR035937">
    <property type="entry name" value="MutM-like_N-ter"/>
</dbReference>
<dbReference type="InterPro" id="IPR010979">
    <property type="entry name" value="Ribosomal_uS13-like_H2TH"/>
</dbReference>
<dbReference type="InterPro" id="IPR000214">
    <property type="entry name" value="Znf_DNA_glyclase/AP_lyase"/>
</dbReference>
<dbReference type="InterPro" id="IPR010663">
    <property type="entry name" value="Znf_FPG/IleRS"/>
</dbReference>
<dbReference type="NCBIfam" id="TIGR00577">
    <property type="entry name" value="fpg"/>
    <property type="match status" value="1"/>
</dbReference>
<dbReference type="NCBIfam" id="NF002211">
    <property type="entry name" value="PRK01103.1"/>
    <property type="match status" value="1"/>
</dbReference>
<dbReference type="PANTHER" id="PTHR22993">
    <property type="entry name" value="FORMAMIDOPYRIMIDINE-DNA GLYCOSYLASE"/>
    <property type="match status" value="1"/>
</dbReference>
<dbReference type="PANTHER" id="PTHR22993:SF9">
    <property type="entry name" value="FORMAMIDOPYRIMIDINE-DNA GLYCOSYLASE"/>
    <property type="match status" value="1"/>
</dbReference>
<dbReference type="Pfam" id="PF01149">
    <property type="entry name" value="Fapy_DNA_glyco"/>
    <property type="match status" value="1"/>
</dbReference>
<dbReference type="Pfam" id="PF06831">
    <property type="entry name" value="H2TH"/>
    <property type="match status" value="1"/>
</dbReference>
<dbReference type="Pfam" id="PF06827">
    <property type="entry name" value="zf-FPG_IleRS"/>
    <property type="match status" value="1"/>
</dbReference>
<dbReference type="SMART" id="SM00898">
    <property type="entry name" value="Fapy_DNA_glyco"/>
    <property type="match status" value="1"/>
</dbReference>
<dbReference type="SMART" id="SM01232">
    <property type="entry name" value="H2TH"/>
    <property type="match status" value="1"/>
</dbReference>
<dbReference type="SUPFAM" id="SSF57716">
    <property type="entry name" value="Glucocorticoid receptor-like (DNA-binding domain)"/>
    <property type="match status" value="1"/>
</dbReference>
<dbReference type="SUPFAM" id="SSF81624">
    <property type="entry name" value="N-terminal domain of MutM-like DNA repair proteins"/>
    <property type="match status" value="1"/>
</dbReference>
<dbReference type="SUPFAM" id="SSF46946">
    <property type="entry name" value="S13-like H2TH domain"/>
    <property type="match status" value="1"/>
</dbReference>
<dbReference type="PROSITE" id="PS51068">
    <property type="entry name" value="FPG_CAT"/>
    <property type="match status" value="1"/>
</dbReference>
<dbReference type="PROSITE" id="PS01242">
    <property type="entry name" value="ZF_FPG_1"/>
    <property type="match status" value="1"/>
</dbReference>
<dbReference type="PROSITE" id="PS51066">
    <property type="entry name" value="ZF_FPG_2"/>
    <property type="match status" value="1"/>
</dbReference>
<accession>B1LK72</accession>
<gene>
    <name evidence="2" type="primary">mutM</name>
    <name evidence="2" type="synonym">fpg</name>
    <name type="ordered locus">EcSMS35_3970</name>
</gene>
<keyword id="KW-0227">DNA damage</keyword>
<keyword id="KW-0234">DNA repair</keyword>
<keyword id="KW-0238">DNA-binding</keyword>
<keyword id="KW-0326">Glycosidase</keyword>
<keyword id="KW-0378">Hydrolase</keyword>
<keyword id="KW-0456">Lyase</keyword>
<keyword id="KW-0479">Metal-binding</keyword>
<keyword id="KW-0511">Multifunctional enzyme</keyword>
<keyword id="KW-0862">Zinc</keyword>
<keyword id="KW-0863">Zinc-finger</keyword>
<organism>
    <name type="scientific">Escherichia coli (strain SMS-3-5 / SECEC)</name>
    <dbReference type="NCBI Taxonomy" id="439855"/>
    <lineage>
        <taxon>Bacteria</taxon>
        <taxon>Pseudomonadati</taxon>
        <taxon>Pseudomonadota</taxon>
        <taxon>Gammaproteobacteria</taxon>
        <taxon>Enterobacterales</taxon>
        <taxon>Enterobacteriaceae</taxon>
        <taxon>Escherichia</taxon>
    </lineage>
</organism>